<keyword id="KW-0002">3D-structure</keyword>
<keyword id="KW-0112">Calmodulin-binding</keyword>
<keyword id="KW-0966">Cell projection</keyword>
<keyword id="KW-0969">Cilium</keyword>
<keyword id="KW-0175">Coiled coil</keyword>
<keyword id="KW-0963">Cytoplasm</keyword>
<keyword id="KW-0206">Cytoskeleton</keyword>
<keyword id="KW-0282">Flagellum</keyword>
<keyword id="KW-1185">Reference proteome</keyword>
<keyword id="KW-0729">SH3-binding</keyword>
<comment type="function">
    <text evidence="1 6">Adapter that functions to localize a calcium-sensitive signal transduction machinery in sperm to a calcium-permeable ion channel. Microtubule inner protein (MIP) part of the dynein-decorated doublet microtubules (DMTs) in cilia axoneme, which is required for motile cilia beating (PubMed:34715025).</text>
</comment>
<comment type="subunit">
    <text evidence="1 2 7">Microtubule inner protein component of sperm flagellar doublet microtubules (PubMed:37327785). Binds calmodulin via its IQ domain. Interacts with TRPC1, TRPC2, TRPC5, but not TRPC3 (By similarity). Interacts with CFAP45 (By similarity).</text>
</comment>
<comment type="subcellular location">
    <subcellularLocation>
        <location evidence="7">Cytoplasm</location>
        <location evidence="7">Cytoskeleton</location>
        <location evidence="7">Flagellum axoneme</location>
    </subcellularLocation>
    <subcellularLocation>
        <location evidence="6">Cytoplasm</location>
        <location evidence="6">Cytoskeleton</location>
        <location evidence="6">Cilium axoneme</location>
    </subcellularLocation>
    <text evidence="1">Sperm acrosomal crescent and flagellar principal piece.</text>
</comment>
<comment type="tissue specificity">
    <text evidence="6">Expressed in trachea multiciliated cells.</text>
</comment>
<comment type="domain">
    <text evidence="1">The IQ motif is involved in calmodulin binding.</text>
</comment>
<sequence>MVAMDPTGPSESIYNLIPSDWKEPPQPPRYVSIFKATVKDDMQKFKTAMKTMGPAKLEVPSPKDFLKKHSKEKILPPKKKFEWNERRKPPVPLRTDHPVMGIQSEKNFINTNAADVIMGVAKKPKPIYVDKRTGDKHDLETSGLVPKYINKKDYGVTPEYICKRNEEVKKAQEEYDNYIQENLRKAAMKRLSDEEREAVLQGLKKNWEEVHKEFQSLSVFIDSIPKKIRKQKLEEEMKQLEHDIGVLEKHKVIYIANKK</sequence>
<organism evidence="8">
    <name type="scientific">Bos taurus</name>
    <name type="common">Bovine</name>
    <dbReference type="NCBI Taxonomy" id="9913"/>
    <lineage>
        <taxon>Eukaryota</taxon>
        <taxon>Metazoa</taxon>
        <taxon>Chordata</taxon>
        <taxon>Craniata</taxon>
        <taxon>Vertebrata</taxon>
        <taxon>Euteleostomi</taxon>
        <taxon>Mammalia</taxon>
        <taxon>Eutheria</taxon>
        <taxon>Laurasiatheria</taxon>
        <taxon>Artiodactyla</taxon>
        <taxon>Ruminantia</taxon>
        <taxon>Pecora</taxon>
        <taxon>Bovidae</taxon>
        <taxon>Bovinae</taxon>
        <taxon>Bos</taxon>
    </lineage>
</organism>
<protein>
    <recommendedName>
        <fullName>Enkurin</fullName>
    </recommendedName>
</protein>
<proteinExistence type="evidence at protein level"/>
<dbReference type="RefSeq" id="NP_001179374.1">
    <property type="nucleotide sequence ID" value="NM_001192445.1"/>
</dbReference>
<dbReference type="PDB" id="7RRO">
    <property type="method" value="EM"/>
    <property type="resolution" value="3.40 A"/>
    <property type="chains" value="h/i/j/k=1-259"/>
</dbReference>
<dbReference type="PDB" id="8OTZ">
    <property type="method" value="EM"/>
    <property type="resolution" value="3.60 A"/>
    <property type="chains" value="B5/B6/By/Bz=1-259"/>
</dbReference>
<dbReference type="PDB" id="9CPB">
    <property type="method" value="EM"/>
    <property type="resolution" value="3.52 A"/>
    <property type="chains" value="3S/3T/3U/3V=1-259"/>
</dbReference>
<dbReference type="PDBsum" id="7RRO"/>
<dbReference type="PDBsum" id="8OTZ"/>
<dbReference type="PDBsum" id="9CPB"/>
<dbReference type="EMDB" id="EMD-17187"/>
<dbReference type="EMDB" id="EMD-24664"/>
<dbReference type="EMDB" id="EMD-45801"/>
<dbReference type="EMDB" id="EMD-50664"/>
<dbReference type="SMR" id="E1B836"/>
<dbReference type="FunCoup" id="E1B836">
    <property type="interactions" value="385"/>
</dbReference>
<dbReference type="STRING" id="9913.ENSBTAP00000020682"/>
<dbReference type="PaxDb" id="9913-ENSBTAP00000020682"/>
<dbReference type="Ensembl" id="ENSBTAT00000020682.6">
    <property type="protein sequence ID" value="ENSBTAP00000020682.5"/>
    <property type="gene ID" value="ENSBTAG00000015569.6"/>
</dbReference>
<dbReference type="GeneID" id="516469"/>
<dbReference type="KEGG" id="bta:516469"/>
<dbReference type="CTD" id="219670"/>
<dbReference type="VEuPathDB" id="HostDB:ENSBTAG00000015569"/>
<dbReference type="VGNC" id="VGNC:28496">
    <property type="gene designation" value="ENKUR"/>
</dbReference>
<dbReference type="eggNOG" id="ENOG502QT8E">
    <property type="taxonomic scope" value="Eukaryota"/>
</dbReference>
<dbReference type="GeneTree" id="ENSGT00940000153866"/>
<dbReference type="HOGENOM" id="CLU_088051_1_0_1"/>
<dbReference type="InParanoid" id="E1B836"/>
<dbReference type="OMA" id="HRVIYIA"/>
<dbReference type="OrthoDB" id="2123594at2759"/>
<dbReference type="TreeFam" id="TF323892"/>
<dbReference type="Proteomes" id="UP000009136">
    <property type="component" value="Chromosome 13"/>
</dbReference>
<dbReference type="GO" id="GO:0097728">
    <property type="term" value="C:9+0 motile cilium"/>
    <property type="evidence" value="ECO:0007669"/>
    <property type="project" value="Ensembl"/>
</dbReference>
<dbReference type="GO" id="GO:0001669">
    <property type="term" value="C:acrosomal vesicle"/>
    <property type="evidence" value="ECO:0000318"/>
    <property type="project" value="GO_Central"/>
</dbReference>
<dbReference type="GO" id="GO:0160112">
    <property type="term" value="C:axonemal B tubule inner sheath"/>
    <property type="evidence" value="ECO:0000250"/>
    <property type="project" value="UniProtKB"/>
</dbReference>
<dbReference type="GO" id="GO:0005879">
    <property type="term" value="C:axonemal microtubule"/>
    <property type="evidence" value="ECO:0000314"/>
    <property type="project" value="UniProtKB"/>
</dbReference>
<dbReference type="GO" id="GO:0036126">
    <property type="term" value="C:sperm flagellum"/>
    <property type="evidence" value="ECO:0000250"/>
    <property type="project" value="UniProtKB"/>
</dbReference>
<dbReference type="GO" id="GO:0097228">
    <property type="term" value="C:sperm principal piece"/>
    <property type="evidence" value="ECO:0007669"/>
    <property type="project" value="Ensembl"/>
</dbReference>
<dbReference type="GO" id="GO:0005516">
    <property type="term" value="F:calmodulin binding"/>
    <property type="evidence" value="ECO:0000318"/>
    <property type="project" value="GO_Central"/>
</dbReference>
<dbReference type="GO" id="GO:0017124">
    <property type="term" value="F:SH3 domain binding"/>
    <property type="evidence" value="ECO:0007669"/>
    <property type="project" value="UniProtKB-KW"/>
</dbReference>
<dbReference type="GO" id="GO:0061966">
    <property type="term" value="P:establishment of left/right asymmetry"/>
    <property type="evidence" value="ECO:0007669"/>
    <property type="project" value="Ensembl"/>
</dbReference>
<dbReference type="GO" id="GO:0030317">
    <property type="term" value="P:flagellated sperm motility"/>
    <property type="evidence" value="ECO:0000250"/>
    <property type="project" value="UniProtKB"/>
</dbReference>
<dbReference type="InterPro" id="IPR027012">
    <property type="entry name" value="Enkurin_dom"/>
</dbReference>
<dbReference type="InterPro" id="IPR052102">
    <property type="entry name" value="Enkurin_domain-protein"/>
</dbReference>
<dbReference type="PANTHER" id="PTHR21490:SF0">
    <property type="entry name" value="ENKURIN"/>
    <property type="match status" value="1"/>
</dbReference>
<dbReference type="PANTHER" id="PTHR21490">
    <property type="entry name" value="ENKURIN-RELATED"/>
    <property type="match status" value="1"/>
</dbReference>
<dbReference type="Pfam" id="PF13864">
    <property type="entry name" value="Enkurin"/>
    <property type="match status" value="1"/>
</dbReference>
<dbReference type="PROSITE" id="PS51665">
    <property type="entry name" value="ENKURIN"/>
    <property type="match status" value="1"/>
</dbReference>
<accession>E1B836</accession>
<feature type="chain" id="PRO_0000456166" description="Enkurin">
    <location>
        <begin position="1"/>
        <end position="259"/>
    </location>
</feature>
<feature type="domain" description="Enkurin" evidence="4">
    <location>
        <begin position="163"/>
        <end position="255"/>
    </location>
</feature>
<feature type="domain" description="IQ" evidence="2">
    <location>
        <begin position="179"/>
        <end position="190"/>
    </location>
</feature>
<feature type="region of interest" description="Disordered" evidence="5">
    <location>
        <begin position="1"/>
        <end position="26"/>
    </location>
</feature>
<feature type="region of interest" description="Disordered" evidence="5">
    <location>
        <begin position="76"/>
        <end position="98"/>
    </location>
</feature>
<feature type="region of interest" description="Interaction with TRPC proteins" evidence="1">
    <location>
        <begin position="163"/>
        <end position="258"/>
    </location>
</feature>
<feature type="short sequence motif" description="SH3-binding" evidence="3">
    <location>
        <begin position="86"/>
        <end position="92"/>
    </location>
</feature>
<feature type="compositionally biased region" description="Basic and acidic residues" evidence="5">
    <location>
        <begin position="76"/>
        <end position="88"/>
    </location>
</feature>
<name>ENKUR_BOVIN</name>
<reference key="1">
    <citation type="journal article" date="2009" name="Genome Biol.">
        <title>A whole-genome assembly of the domestic cow, Bos taurus.</title>
        <authorList>
            <person name="Zimin A.V."/>
            <person name="Delcher A.L."/>
            <person name="Florea L."/>
            <person name="Kelley D.R."/>
            <person name="Schatz M.C."/>
            <person name="Puiu D."/>
            <person name="Hanrahan F."/>
            <person name="Pertea G."/>
            <person name="Van Tassell C.P."/>
            <person name="Sonstegard T.S."/>
            <person name="Marcais G."/>
            <person name="Roberts M."/>
            <person name="Subramanian P."/>
            <person name="Yorke J.A."/>
            <person name="Salzberg S.L."/>
        </authorList>
    </citation>
    <scope>NUCLEOTIDE SEQUENCE [LARGE SCALE GENOMIC DNA]</scope>
    <source>
        <strain>Hereford</strain>
    </source>
</reference>
<reference evidence="9" key="2">
    <citation type="journal article" date="2021" name="Cell">
        <title>De novo identification of mammalian ciliary motility proteins using cryo-EM.</title>
        <authorList>
            <person name="Gui M."/>
            <person name="Farley H."/>
            <person name="Anujan P."/>
            <person name="Anderson J.R."/>
            <person name="Maxwell D.W."/>
            <person name="Whitchurch J.B."/>
            <person name="Botsch J.J."/>
            <person name="Qiu T."/>
            <person name="Meleppattu S."/>
            <person name="Singh S.K."/>
            <person name="Zhang Q."/>
            <person name="Thompson J."/>
            <person name="Lucas J.S."/>
            <person name="Bingle C.D."/>
            <person name="Norris D.P."/>
            <person name="Roy S."/>
            <person name="Brown A."/>
        </authorList>
    </citation>
    <scope>STRUCTURE BY ELECTRON MICROSCOPY (3.40 ANGSTROMS)</scope>
    <scope>FUNCTION</scope>
    <scope>SUBCELLULAR LOCATION</scope>
    <scope>TISSUE SPECIFICITY</scope>
</reference>
<reference evidence="10" key="3">
    <citation type="journal article" date="2023" name="Cell">
        <title>Structural specializations of the sperm tail.</title>
        <authorList>
            <person name="Leung M.R."/>
            <person name="Zeng J."/>
            <person name="Wang X."/>
            <person name="Roelofs M.C."/>
            <person name="Huang W."/>
            <person name="Zenezini Chiozzi R."/>
            <person name="Hevler J.F."/>
            <person name="Heck A.J.R."/>
            <person name="Dutcher S.K."/>
            <person name="Brown A."/>
            <person name="Zhang R."/>
            <person name="Zeev-Ben-Mordehai T."/>
        </authorList>
    </citation>
    <scope>STRUCTURE BY ELECTRON MICROSCOPY (3.60 ANGSTROMS)</scope>
    <scope>SUBUNIT</scope>
    <scope>SUBCELLULAR LOCATION</scope>
</reference>
<gene>
    <name type="primary">ENKUR</name>
</gene>
<evidence type="ECO:0000250" key="1">
    <source>
        <dbReference type="UniProtKB" id="Q6SP97"/>
    </source>
</evidence>
<evidence type="ECO:0000250" key="2">
    <source>
        <dbReference type="UniProtKB" id="Q8TC29"/>
    </source>
</evidence>
<evidence type="ECO:0000255" key="3"/>
<evidence type="ECO:0000255" key="4">
    <source>
        <dbReference type="PROSITE-ProRule" id="PRU01000"/>
    </source>
</evidence>
<evidence type="ECO:0000256" key="5">
    <source>
        <dbReference type="SAM" id="MobiDB-lite"/>
    </source>
</evidence>
<evidence type="ECO:0000269" key="6">
    <source>
    </source>
</evidence>
<evidence type="ECO:0000269" key="7">
    <source>
    </source>
</evidence>
<evidence type="ECO:0000312" key="8">
    <source>
        <dbReference type="Proteomes" id="UP000009136"/>
    </source>
</evidence>
<evidence type="ECO:0007744" key="9">
    <source>
        <dbReference type="PDB" id="7RRO"/>
    </source>
</evidence>
<evidence type="ECO:0007744" key="10">
    <source>
        <dbReference type="PDB" id="8OTZ"/>
    </source>
</evidence>